<organism>
    <name type="scientific">Shigella flexneri</name>
    <dbReference type="NCBI Taxonomy" id="623"/>
    <lineage>
        <taxon>Bacteria</taxon>
        <taxon>Pseudomonadati</taxon>
        <taxon>Pseudomonadota</taxon>
        <taxon>Gammaproteobacteria</taxon>
        <taxon>Enterobacterales</taxon>
        <taxon>Enterobacteriaceae</taxon>
        <taxon>Shigella</taxon>
    </lineage>
</organism>
<reference key="1">
    <citation type="journal article" date="2002" name="Nucleic Acids Res.">
        <title>Genome sequence of Shigella flexneri 2a: insights into pathogenicity through comparison with genomes of Escherichia coli K12 and O157.</title>
        <authorList>
            <person name="Jin Q."/>
            <person name="Yuan Z."/>
            <person name="Xu J."/>
            <person name="Wang Y."/>
            <person name="Shen Y."/>
            <person name="Lu W."/>
            <person name="Wang J."/>
            <person name="Liu H."/>
            <person name="Yang J."/>
            <person name="Yang F."/>
            <person name="Zhang X."/>
            <person name="Zhang J."/>
            <person name="Yang G."/>
            <person name="Wu H."/>
            <person name="Qu D."/>
            <person name="Dong J."/>
            <person name="Sun L."/>
            <person name="Xue Y."/>
            <person name="Zhao A."/>
            <person name="Gao Y."/>
            <person name="Zhu J."/>
            <person name="Kan B."/>
            <person name="Ding K."/>
            <person name="Chen S."/>
            <person name="Cheng H."/>
            <person name="Yao Z."/>
            <person name="He B."/>
            <person name="Chen R."/>
            <person name="Ma D."/>
            <person name="Qiang B."/>
            <person name="Wen Y."/>
            <person name="Hou Y."/>
            <person name="Yu J."/>
        </authorList>
    </citation>
    <scope>NUCLEOTIDE SEQUENCE [LARGE SCALE GENOMIC DNA]</scope>
    <source>
        <strain>301 / Serotype 2a</strain>
    </source>
</reference>
<reference key="2">
    <citation type="journal article" date="2003" name="Infect. Immun.">
        <title>Complete genome sequence and comparative genomics of Shigella flexneri serotype 2a strain 2457T.</title>
        <authorList>
            <person name="Wei J."/>
            <person name="Goldberg M.B."/>
            <person name="Burland V."/>
            <person name="Venkatesan M.M."/>
            <person name="Deng W."/>
            <person name="Fournier G."/>
            <person name="Mayhew G.F."/>
            <person name="Plunkett G. III"/>
            <person name="Rose D.J."/>
            <person name="Darling A."/>
            <person name="Mau B."/>
            <person name="Perna N.T."/>
            <person name="Payne S.M."/>
            <person name="Runyen-Janecky L.J."/>
            <person name="Zhou S."/>
            <person name="Schwartz D.C."/>
            <person name="Blattner F.R."/>
        </authorList>
    </citation>
    <scope>NUCLEOTIDE SEQUENCE [LARGE SCALE GENOMIC DNA]</scope>
    <source>
        <strain>ATCC 700930 / 2457T / Serotype 2a</strain>
    </source>
</reference>
<feature type="chain" id="PRO_0000343976" description="Cell division inhibitor SulA">
    <location>
        <begin position="1"/>
        <end position="169"/>
    </location>
</feature>
<feature type="region of interest" description="FtsZ binding" evidence="1">
    <location>
        <begin position="106"/>
        <end position="112"/>
    </location>
</feature>
<feature type="region of interest" description="Lon protease binding" evidence="1">
    <location>
        <begin position="162"/>
        <end position="169"/>
    </location>
</feature>
<feature type="site" description="Essential for degradation by Lon protease" evidence="1">
    <location>
        <position position="169"/>
    </location>
</feature>
<accession>Q83RX1</accession>
<accession>Q7UD16</accession>
<sequence>MYTSGYAHRSSSFSSAASKIARVSTENTTAGLISEVVYREDQPMMTQLLLLPLLQQLGQQSRWQLWLTPQQKLSREWVQASGLPLTKVMQISQLSPCHTVESMVRALRTGNYSVVIGWLTDDLTEEEHAELVDAANEGNAMGFIMRPVSASSHTTRQLSGLKIHSNLYH</sequence>
<name>SULA_SHIFL</name>
<evidence type="ECO:0000255" key="1">
    <source>
        <dbReference type="HAMAP-Rule" id="MF_01179"/>
    </source>
</evidence>
<gene>
    <name evidence="1" type="primary">sulA</name>
    <name type="ordered locus">SF0958</name>
    <name type="ordered locus">S1024</name>
</gene>
<comment type="function">
    <text evidence="1">Component of the SOS system and an inhibitor of cell division. Accumulation of SulA causes rapid cessation of cell division and the appearance of long, non-septate filaments. In the presence of GTP, binds a polymerization-competent form of FtsZ in a 1:1 ratio, thus inhibiting FtsZ polymerization and therefore preventing it from participating in the assembly of the Z ring. This mechanism prevents the premature segregation of damaged DNA to daughter cells during cell division.</text>
</comment>
<comment type="subunit">
    <text evidence="1">Interacts with FtsZ.</text>
</comment>
<comment type="induction">
    <text evidence="1">By DNA damage, as part of the SOS response.</text>
</comment>
<comment type="PTM">
    <text evidence="1">Is rapidly cleaved and degraded by the Lon protease once DNA damage is repaired.</text>
</comment>
<comment type="similarity">
    <text evidence="1">Belongs to the SulA family.</text>
</comment>
<proteinExistence type="inferred from homology"/>
<dbReference type="EMBL" id="AE005674">
    <property type="protein sequence ID" value="AAN42587.2"/>
    <property type="molecule type" value="Genomic_DNA"/>
</dbReference>
<dbReference type="EMBL" id="AE014073">
    <property type="protein sequence ID" value="AAP16472.1"/>
    <property type="molecule type" value="Genomic_DNA"/>
</dbReference>
<dbReference type="RefSeq" id="NP_706880.2">
    <property type="nucleotide sequence ID" value="NC_004337.2"/>
</dbReference>
<dbReference type="RefSeq" id="WP_000288715.1">
    <property type="nucleotide sequence ID" value="NZ_WPGW01000054.1"/>
</dbReference>
<dbReference type="SMR" id="Q83RX1"/>
<dbReference type="STRING" id="198214.SF0958"/>
<dbReference type="PaxDb" id="198214-SF0958"/>
<dbReference type="GeneID" id="1023924"/>
<dbReference type="KEGG" id="sfl:SF0958"/>
<dbReference type="KEGG" id="sfx:S1024"/>
<dbReference type="PATRIC" id="fig|198214.7.peg.1116"/>
<dbReference type="HOGENOM" id="CLU_118972_1_0_6"/>
<dbReference type="Proteomes" id="UP000001006">
    <property type="component" value="Chromosome"/>
</dbReference>
<dbReference type="Proteomes" id="UP000002673">
    <property type="component" value="Chromosome"/>
</dbReference>
<dbReference type="GO" id="GO:0000917">
    <property type="term" value="P:division septum assembly"/>
    <property type="evidence" value="ECO:0007669"/>
    <property type="project" value="UniProtKB-KW"/>
</dbReference>
<dbReference type="GO" id="GO:0006281">
    <property type="term" value="P:DNA repair"/>
    <property type="evidence" value="ECO:0007669"/>
    <property type="project" value="TreeGrafter"/>
</dbReference>
<dbReference type="GO" id="GO:0051782">
    <property type="term" value="P:negative regulation of cell division"/>
    <property type="evidence" value="ECO:0007669"/>
    <property type="project" value="UniProtKB-UniRule"/>
</dbReference>
<dbReference type="GO" id="GO:0009432">
    <property type="term" value="P:SOS response"/>
    <property type="evidence" value="ECO:0007669"/>
    <property type="project" value="UniProtKB-UniRule"/>
</dbReference>
<dbReference type="FunFam" id="3.40.50.300:FF:000417">
    <property type="entry name" value="Cell division inhibitor SulA"/>
    <property type="match status" value="1"/>
</dbReference>
<dbReference type="Gene3D" id="3.40.50.300">
    <property type="entry name" value="P-loop containing nucleotide triphosphate hydrolases"/>
    <property type="match status" value="1"/>
</dbReference>
<dbReference type="HAMAP" id="MF_01179">
    <property type="entry name" value="SulA"/>
    <property type="match status" value="1"/>
</dbReference>
<dbReference type="InterPro" id="IPR004596">
    <property type="entry name" value="Cell_div_suppressor_SulA"/>
</dbReference>
<dbReference type="InterPro" id="IPR027417">
    <property type="entry name" value="P-loop_NTPase"/>
</dbReference>
<dbReference type="InterPro" id="IPR050356">
    <property type="entry name" value="SulA_CellDiv_inhibitor"/>
</dbReference>
<dbReference type="InterPro" id="IPR047696">
    <property type="entry name" value="SulA_enterobact"/>
</dbReference>
<dbReference type="NCBIfam" id="NF007892">
    <property type="entry name" value="PRK10595.1"/>
    <property type="match status" value="1"/>
</dbReference>
<dbReference type="NCBIfam" id="TIGR00623">
    <property type="entry name" value="SOS_SulA_coli"/>
    <property type="match status" value="1"/>
</dbReference>
<dbReference type="PANTHER" id="PTHR35369">
    <property type="entry name" value="BLR3025 PROTEIN-RELATED"/>
    <property type="match status" value="1"/>
</dbReference>
<dbReference type="PANTHER" id="PTHR35369:SF4">
    <property type="entry name" value="CELL DIVISION INHIBITOR SULA"/>
    <property type="match status" value="1"/>
</dbReference>
<dbReference type="Pfam" id="PF03846">
    <property type="entry name" value="SulA"/>
    <property type="match status" value="1"/>
</dbReference>
<dbReference type="PIRSF" id="PIRSF003093">
    <property type="entry name" value="SulA"/>
    <property type="match status" value="1"/>
</dbReference>
<dbReference type="SUPFAM" id="SSF52540">
    <property type="entry name" value="P-loop containing nucleoside triphosphate hydrolases"/>
    <property type="match status" value="1"/>
</dbReference>
<keyword id="KW-0131">Cell cycle</keyword>
<keyword id="KW-0132">Cell division</keyword>
<keyword id="KW-0227">DNA damage</keyword>
<keyword id="KW-1185">Reference proteome</keyword>
<keyword id="KW-0717">Septation</keyword>
<keyword id="KW-0742">SOS response</keyword>
<protein>
    <recommendedName>
        <fullName evidence="1">Cell division inhibitor SulA</fullName>
    </recommendedName>
</protein>